<organism>
    <name type="scientific">Stenotrophomonas maltophilia (strain R551-3)</name>
    <dbReference type="NCBI Taxonomy" id="391008"/>
    <lineage>
        <taxon>Bacteria</taxon>
        <taxon>Pseudomonadati</taxon>
        <taxon>Pseudomonadota</taxon>
        <taxon>Gammaproteobacteria</taxon>
        <taxon>Lysobacterales</taxon>
        <taxon>Lysobacteraceae</taxon>
        <taxon>Stenotrophomonas</taxon>
        <taxon>Stenotrophomonas maltophilia group</taxon>
    </lineage>
</organism>
<comment type="function">
    <text evidence="1">This protein binds to 23S rRNA in the presence of protein L20.</text>
</comment>
<comment type="subunit">
    <text evidence="1">Part of the 50S ribosomal subunit. Contacts protein L20.</text>
</comment>
<comment type="similarity">
    <text evidence="1">Belongs to the bacterial ribosomal protein bL21 family.</text>
</comment>
<dbReference type="EMBL" id="CP001111">
    <property type="protein sequence ID" value="ACF50824.1"/>
    <property type="molecule type" value="Genomic_DNA"/>
</dbReference>
<dbReference type="RefSeq" id="WP_004148331.1">
    <property type="nucleotide sequence ID" value="NC_011071.1"/>
</dbReference>
<dbReference type="SMR" id="B4SP12"/>
<dbReference type="STRING" id="391008.Smal_1119"/>
<dbReference type="GeneID" id="97225387"/>
<dbReference type="KEGG" id="smt:Smal_1119"/>
<dbReference type="eggNOG" id="COG0261">
    <property type="taxonomic scope" value="Bacteria"/>
</dbReference>
<dbReference type="HOGENOM" id="CLU_061463_3_3_6"/>
<dbReference type="OrthoDB" id="9813334at2"/>
<dbReference type="Proteomes" id="UP000001867">
    <property type="component" value="Chromosome"/>
</dbReference>
<dbReference type="GO" id="GO:0005737">
    <property type="term" value="C:cytoplasm"/>
    <property type="evidence" value="ECO:0007669"/>
    <property type="project" value="UniProtKB-ARBA"/>
</dbReference>
<dbReference type="GO" id="GO:1990904">
    <property type="term" value="C:ribonucleoprotein complex"/>
    <property type="evidence" value="ECO:0007669"/>
    <property type="project" value="UniProtKB-KW"/>
</dbReference>
<dbReference type="GO" id="GO:0005840">
    <property type="term" value="C:ribosome"/>
    <property type="evidence" value="ECO:0007669"/>
    <property type="project" value="UniProtKB-KW"/>
</dbReference>
<dbReference type="GO" id="GO:0019843">
    <property type="term" value="F:rRNA binding"/>
    <property type="evidence" value="ECO:0007669"/>
    <property type="project" value="UniProtKB-UniRule"/>
</dbReference>
<dbReference type="GO" id="GO:0003735">
    <property type="term" value="F:structural constituent of ribosome"/>
    <property type="evidence" value="ECO:0007669"/>
    <property type="project" value="InterPro"/>
</dbReference>
<dbReference type="GO" id="GO:0006412">
    <property type="term" value="P:translation"/>
    <property type="evidence" value="ECO:0007669"/>
    <property type="project" value="UniProtKB-UniRule"/>
</dbReference>
<dbReference type="HAMAP" id="MF_01363">
    <property type="entry name" value="Ribosomal_bL21"/>
    <property type="match status" value="1"/>
</dbReference>
<dbReference type="InterPro" id="IPR028909">
    <property type="entry name" value="bL21-like"/>
</dbReference>
<dbReference type="InterPro" id="IPR036164">
    <property type="entry name" value="bL21-like_sf"/>
</dbReference>
<dbReference type="InterPro" id="IPR001787">
    <property type="entry name" value="Ribosomal_bL21"/>
</dbReference>
<dbReference type="InterPro" id="IPR018258">
    <property type="entry name" value="Ribosomal_bL21_CS"/>
</dbReference>
<dbReference type="NCBIfam" id="TIGR00061">
    <property type="entry name" value="L21"/>
    <property type="match status" value="1"/>
</dbReference>
<dbReference type="PANTHER" id="PTHR21349">
    <property type="entry name" value="50S RIBOSOMAL PROTEIN L21"/>
    <property type="match status" value="1"/>
</dbReference>
<dbReference type="PANTHER" id="PTHR21349:SF0">
    <property type="entry name" value="LARGE RIBOSOMAL SUBUNIT PROTEIN BL21M"/>
    <property type="match status" value="1"/>
</dbReference>
<dbReference type="Pfam" id="PF00829">
    <property type="entry name" value="Ribosomal_L21p"/>
    <property type="match status" value="1"/>
</dbReference>
<dbReference type="SUPFAM" id="SSF141091">
    <property type="entry name" value="L21p-like"/>
    <property type="match status" value="1"/>
</dbReference>
<dbReference type="PROSITE" id="PS01169">
    <property type="entry name" value="RIBOSOMAL_L21"/>
    <property type="match status" value="1"/>
</dbReference>
<proteinExistence type="inferred from homology"/>
<sequence>MYAVLVTGGKQYRVAQGEKLRIEKLEVEVGSEIKFDNILLLGDSDGIKIGDALSGAAVTATVLSQGRADKVRIIKFRRRKHHMKRQGHRQYYTEIEITGIAGGSK</sequence>
<reference key="1">
    <citation type="submission" date="2008-06" db="EMBL/GenBank/DDBJ databases">
        <title>Complete sequence of Stenotrophomonas maltophilia R551-3.</title>
        <authorList>
            <consortium name="US DOE Joint Genome Institute"/>
            <person name="Lucas S."/>
            <person name="Copeland A."/>
            <person name="Lapidus A."/>
            <person name="Glavina del Rio T."/>
            <person name="Dalin E."/>
            <person name="Tice H."/>
            <person name="Pitluck S."/>
            <person name="Chain P."/>
            <person name="Malfatti S."/>
            <person name="Shin M."/>
            <person name="Vergez L."/>
            <person name="Lang D."/>
            <person name="Schmutz J."/>
            <person name="Larimer F."/>
            <person name="Land M."/>
            <person name="Hauser L."/>
            <person name="Kyrpides N."/>
            <person name="Mikhailova N."/>
            <person name="Taghavi S."/>
            <person name="Monchy S."/>
            <person name="Newman L."/>
            <person name="Vangronsveld J."/>
            <person name="van der Lelie D."/>
            <person name="Richardson P."/>
        </authorList>
    </citation>
    <scope>NUCLEOTIDE SEQUENCE [LARGE SCALE GENOMIC DNA]</scope>
    <source>
        <strain>R551-3</strain>
    </source>
</reference>
<name>RL21_STRM5</name>
<evidence type="ECO:0000255" key="1">
    <source>
        <dbReference type="HAMAP-Rule" id="MF_01363"/>
    </source>
</evidence>
<evidence type="ECO:0000305" key="2"/>
<feature type="chain" id="PRO_1000143855" description="Large ribosomal subunit protein bL21">
    <location>
        <begin position="1"/>
        <end position="105"/>
    </location>
</feature>
<keyword id="KW-0687">Ribonucleoprotein</keyword>
<keyword id="KW-0689">Ribosomal protein</keyword>
<keyword id="KW-0694">RNA-binding</keyword>
<keyword id="KW-0699">rRNA-binding</keyword>
<gene>
    <name evidence="1" type="primary">rplU</name>
    <name type="ordered locus">Smal_1119</name>
</gene>
<accession>B4SP12</accession>
<protein>
    <recommendedName>
        <fullName evidence="1">Large ribosomal subunit protein bL21</fullName>
    </recommendedName>
    <alternativeName>
        <fullName evidence="2">50S ribosomal protein L21</fullName>
    </alternativeName>
</protein>